<feature type="chain" id="PRO_0000355123" description="Akirin">
    <location>
        <begin position="1"/>
        <end position="201"/>
    </location>
</feature>
<feature type="region of interest" description="Disordered" evidence="1">
    <location>
        <begin position="1"/>
        <end position="133"/>
    </location>
</feature>
<feature type="short sequence motif" description="Nuclear localization signal">
    <location>
        <begin position="20"/>
        <end position="25"/>
    </location>
</feature>
<feature type="compositionally biased region" description="Polar residues" evidence="1">
    <location>
        <begin position="44"/>
        <end position="57"/>
    </location>
</feature>
<feature type="compositionally biased region" description="Polar residues" evidence="1">
    <location>
        <begin position="65"/>
        <end position="75"/>
    </location>
</feature>
<feature type="compositionally biased region" description="Low complexity" evidence="1">
    <location>
        <begin position="112"/>
        <end position="122"/>
    </location>
</feature>
<feature type="modified residue" description="Phosphoserine" evidence="4">
    <location>
        <position position="39"/>
    </location>
</feature>
<feature type="modified residue" description="Phosphoserine" evidence="4">
    <location>
        <position position="41"/>
    </location>
</feature>
<feature type="modified residue" description="Phosphoserine" evidence="4">
    <location>
        <position position="67"/>
    </location>
</feature>
<feature type="modified residue" description="Phosphoserine" evidence="4">
    <location>
        <position position="123"/>
    </location>
</feature>
<feature type="modified residue" description="Phosphoserine" evidence="4">
    <location>
        <position position="129"/>
    </location>
</feature>
<gene>
    <name evidence="9 15" type="primary">akirin</name>
    <name evidence="10" type="synonym">bhr</name>
    <name evidence="15" type="ORF">CG8580</name>
</gene>
<comment type="function">
    <text evidence="3 5 7 8">Molecular adapter that acts as a bridge between a variety of multiprotein complexes, and which is required for embryonic development and for normal innate immune response (PubMed:18066067, PubMed:22396663, PubMed:25180232, PubMed:32950464). Acts as a regulator of embryonic myogenesis by bridging Twist (twi) with the SWI/SNF-like Brahma complex, promoting expression of twi-regulated genes during myogenesis (PubMed:22396663). Effector of immune deficiency pathway (Imd) by acting either downstream of, or at the level of, the NF-kappa-B factor Relish (Rel) (PubMed:18066067, PubMed:25180232, PubMed:32950464). Acts by bridging the NF-kappa-B factor Rel and the Brahma complex through bap60 interaction, leading to activation a subset of NF-kappa-B factor Relish (Rel) effector genes (PubMed:25180232). Not part of the Toll pathway (PubMed:18066067). Required for the formation of the heart by promoting expression ot tinman (tin) (PubMed:32950464).</text>
</comment>
<comment type="subunit">
    <text evidence="5 6 7 8">Interacts with dmap1 (PubMed:24947515). Interacts with bap60 and rel; interaction is immune stimulation-dependent; activates selected rel target gene promoters (PubMed:25180232, PubMed:32950464). Interacts with bap55; interaction is immune stimulation-dependent (PubMed:25180232). Interacts with twi (PubMed:22396663).</text>
</comment>
<comment type="interaction">
    <interactant intactId="EBI-96644">
        <id>Q9VS59</id>
    </interactant>
    <interactant intactId="EBI-75169">
        <id>Q9VYG2</id>
        <label>Bap60</label>
    </interactant>
    <organismsDiffer>false</organismsDiffer>
    <experiments>4</experiments>
</comment>
<comment type="interaction">
    <interactant intactId="EBI-96644">
        <id>Q9VS59</id>
    </interactant>
    <interactant intactId="EBI-869024">
        <id>Q94527</id>
        <label>Rel</label>
    </interactant>
    <organismsDiffer>false</organismsDiffer>
    <experiments>4</experiments>
</comment>
<comment type="subcellular location">
    <subcellularLocation>
        <location evidence="3 5 7">Nucleus</location>
    </subcellularLocation>
</comment>
<comment type="tissue specificity">
    <text evidence="7">Ubiquitous.</text>
</comment>
<comment type="PTM">
    <text evidence="8">Polyubiquitinated via 'Lys-63'-linked ubiquitin by Hyd, promoting interaction with rel.</text>
</comment>
<comment type="disruption phenotype">
    <text evidence="3 5 8">Homozygous embryonic lethal; early to mid embryonic stages (PubMed:18066067). Embryos display a range of somatic body wall muscle defects (PubMed:22396663). Embryos show morphological defects in the heart, such as abnormal spacing between rows of aortic cells and abnormal patterning of the aortic outflow tract (PubMed:32950464).</text>
</comment>
<comment type="miscellaneous">
    <text>'Akiraka ni suru' means 'making things clear' in Japanese. The name is given based on the presence of the clear nuclear localization signal.</text>
</comment>
<comment type="similarity">
    <text evidence="12">Belongs to the akirin family.</text>
</comment>
<reference evidence="13" key="1">
    <citation type="journal article" date="2000" name="Science">
        <title>The genome sequence of Drosophila melanogaster.</title>
        <authorList>
            <person name="Adams M.D."/>
            <person name="Celniker S.E."/>
            <person name="Holt R.A."/>
            <person name="Evans C.A."/>
            <person name="Gocayne J.D."/>
            <person name="Amanatides P.G."/>
            <person name="Scherer S.E."/>
            <person name="Li P.W."/>
            <person name="Hoskins R.A."/>
            <person name="Galle R.F."/>
            <person name="George R.A."/>
            <person name="Lewis S.E."/>
            <person name="Richards S."/>
            <person name="Ashburner M."/>
            <person name="Henderson S.N."/>
            <person name="Sutton G.G."/>
            <person name="Wortman J.R."/>
            <person name="Yandell M.D."/>
            <person name="Zhang Q."/>
            <person name="Chen L.X."/>
            <person name="Brandon R.C."/>
            <person name="Rogers Y.-H.C."/>
            <person name="Blazej R.G."/>
            <person name="Champe M."/>
            <person name="Pfeiffer B.D."/>
            <person name="Wan K.H."/>
            <person name="Doyle C."/>
            <person name="Baxter E.G."/>
            <person name="Helt G."/>
            <person name="Nelson C.R."/>
            <person name="Miklos G.L.G."/>
            <person name="Abril J.F."/>
            <person name="Agbayani A."/>
            <person name="An H.-J."/>
            <person name="Andrews-Pfannkoch C."/>
            <person name="Baldwin D."/>
            <person name="Ballew R.M."/>
            <person name="Basu A."/>
            <person name="Baxendale J."/>
            <person name="Bayraktaroglu L."/>
            <person name="Beasley E.M."/>
            <person name="Beeson K.Y."/>
            <person name="Benos P.V."/>
            <person name="Berman B.P."/>
            <person name="Bhandari D."/>
            <person name="Bolshakov S."/>
            <person name="Borkova D."/>
            <person name="Botchan M.R."/>
            <person name="Bouck J."/>
            <person name="Brokstein P."/>
            <person name="Brottier P."/>
            <person name="Burtis K.C."/>
            <person name="Busam D.A."/>
            <person name="Butler H."/>
            <person name="Cadieu E."/>
            <person name="Center A."/>
            <person name="Chandra I."/>
            <person name="Cherry J.M."/>
            <person name="Cawley S."/>
            <person name="Dahlke C."/>
            <person name="Davenport L.B."/>
            <person name="Davies P."/>
            <person name="de Pablos B."/>
            <person name="Delcher A."/>
            <person name="Deng Z."/>
            <person name="Mays A.D."/>
            <person name="Dew I."/>
            <person name="Dietz S.M."/>
            <person name="Dodson K."/>
            <person name="Doup L.E."/>
            <person name="Downes M."/>
            <person name="Dugan-Rocha S."/>
            <person name="Dunkov B.C."/>
            <person name="Dunn P."/>
            <person name="Durbin K.J."/>
            <person name="Evangelista C.C."/>
            <person name="Ferraz C."/>
            <person name="Ferriera S."/>
            <person name="Fleischmann W."/>
            <person name="Fosler C."/>
            <person name="Gabrielian A.E."/>
            <person name="Garg N.S."/>
            <person name="Gelbart W.M."/>
            <person name="Glasser K."/>
            <person name="Glodek A."/>
            <person name="Gong F."/>
            <person name="Gorrell J.H."/>
            <person name="Gu Z."/>
            <person name="Guan P."/>
            <person name="Harris M."/>
            <person name="Harris N.L."/>
            <person name="Harvey D.A."/>
            <person name="Heiman T.J."/>
            <person name="Hernandez J.R."/>
            <person name="Houck J."/>
            <person name="Hostin D."/>
            <person name="Houston K.A."/>
            <person name="Howland T.J."/>
            <person name="Wei M.-H."/>
            <person name="Ibegwam C."/>
            <person name="Jalali M."/>
            <person name="Kalush F."/>
            <person name="Karpen G.H."/>
            <person name="Ke Z."/>
            <person name="Kennison J.A."/>
            <person name="Ketchum K.A."/>
            <person name="Kimmel B.E."/>
            <person name="Kodira C.D."/>
            <person name="Kraft C.L."/>
            <person name="Kravitz S."/>
            <person name="Kulp D."/>
            <person name="Lai Z."/>
            <person name="Lasko P."/>
            <person name="Lei Y."/>
            <person name="Levitsky A.A."/>
            <person name="Li J.H."/>
            <person name="Li Z."/>
            <person name="Liang Y."/>
            <person name="Lin X."/>
            <person name="Liu X."/>
            <person name="Mattei B."/>
            <person name="McIntosh T.C."/>
            <person name="McLeod M.P."/>
            <person name="McPherson D."/>
            <person name="Merkulov G."/>
            <person name="Milshina N.V."/>
            <person name="Mobarry C."/>
            <person name="Morris J."/>
            <person name="Moshrefi A."/>
            <person name="Mount S.M."/>
            <person name="Moy M."/>
            <person name="Murphy B."/>
            <person name="Murphy L."/>
            <person name="Muzny D.M."/>
            <person name="Nelson D.L."/>
            <person name="Nelson D.R."/>
            <person name="Nelson K.A."/>
            <person name="Nixon K."/>
            <person name="Nusskern D.R."/>
            <person name="Pacleb J.M."/>
            <person name="Palazzolo M."/>
            <person name="Pittman G.S."/>
            <person name="Pan S."/>
            <person name="Pollard J."/>
            <person name="Puri V."/>
            <person name="Reese M.G."/>
            <person name="Reinert K."/>
            <person name="Remington K."/>
            <person name="Saunders R.D.C."/>
            <person name="Scheeler F."/>
            <person name="Shen H."/>
            <person name="Shue B.C."/>
            <person name="Siden-Kiamos I."/>
            <person name="Simpson M."/>
            <person name="Skupski M.P."/>
            <person name="Smith T.J."/>
            <person name="Spier E."/>
            <person name="Spradling A.C."/>
            <person name="Stapleton M."/>
            <person name="Strong R."/>
            <person name="Sun E."/>
            <person name="Svirskas R."/>
            <person name="Tector C."/>
            <person name="Turner R."/>
            <person name="Venter E."/>
            <person name="Wang A.H."/>
            <person name="Wang X."/>
            <person name="Wang Z.-Y."/>
            <person name="Wassarman D.A."/>
            <person name="Weinstock G.M."/>
            <person name="Weissenbach J."/>
            <person name="Williams S.M."/>
            <person name="Woodage T."/>
            <person name="Worley K.C."/>
            <person name="Wu D."/>
            <person name="Yang S."/>
            <person name="Yao Q.A."/>
            <person name="Ye J."/>
            <person name="Yeh R.-F."/>
            <person name="Zaveri J.S."/>
            <person name="Zhan M."/>
            <person name="Zhang G."/>
            <person name="Zhao Q."/>
            <person name="Zheng L."/>
            <person name="Zheng X.H."/>
            <person name="Zhong F.N."/>
            <person name="Zhong W."/>
            <person name="Zhou X."/>
            <person name="Zhu S.C."/>
            <person name="Zhu X."/>
            <person name="Smith H.O."/>
            <person name="Gibbs R.A."/>
            <person name="Myers E.W."/>
            <person name="Rubin G.M."/>
            <person name="Venter J.C."/>
        </authorList>
    </citation>
    <scope>NUCLEOTIDE SEQUENCE [LARGE SCALE GENOMIC DNA]</scope>
    <source>
        <strain evidence="13">Berkeley</strain>
    </source>
</reference>
<reference evidence="13" key="2">
    <citation type="journal article" date="2002" name="Genome Biol.">
        <title>Annotation of the Drosophila melanogaster euchromatic genome: a systematic review.</title>
        <authorList>
            <person name="Misra S."/>
            <person name="Crosby M.A."/>
            <person name="Mungall C.J."/>
            <person name="Matthews B.B."/>
            <person name="Campbell K.S."/>
            <person name="Hradecky P."/>
            <person name="Huang Y."/>
            <person name="Kaminker J.S."/>
            <person name="Millburn G.H."/>
            <person name="Prochnik S.E."/>
            <person name="Smith C.D."/>
            <person name="Tupy J.L."/>
            <person name="Whitfield E.J."/>
            <person name="Bayraktaroglu L."/>
            <person name="Berman B.P."/>
            <person name="Bettencourt B.R."/>
            <person name="Celniker S.E."/>
            <person name="de Grey A.D.N.J."/>
            <person name="Drysdale R.A."/>
            <person name="Harris N.L."/>
            <person name="Richter J."/>
            <person name="Russo S."/>
            <person name="Schroeder A.J."/>
            <person name="Shu S.Q."/>
            <person name="Stapleton M."/>
            <person name="Yamada C."/>
            <person name="Ashburner M."/>
            <person name="Gelbart W.M."/>
            <person name="Rubin G.M."/>
            <person name="Lewis S.E."/>
        </authorList>
    </citation>
    <scope>GENOME REANNOTATION</scope>
    <source>
        <strain evidence="13">Berkeley</strain>
    </source>
</reference>
<reference evidence="14" key="3">
    <citation type="journal article" date="2002" name="Genome Biol.">
        <title>A Drosophila full-length cDNA resource.</title>
        <authorList>
            <person name="Stapleton M."/>
            <person name="Carlson J.W."/>
            <person name="Brokstein P."/>
            <person name="Yu C."/>
            <person name="Champe M."/>
            <person name="George R.A."/>
            <person name="Guarin H."/>
            <person name="Kronmiller B."/>
            <person name="Pacleb J.M."/>
            <person name="Park S."/>
            <person name="Wan K.H."/>
            <person name="Rubin G.M."/>
            <person name="Celniker S.E."/>
        </authorList>
    </citation>
    <scope>NUCLEOTIDE SEQUENCE [LARGE SCALE MRNA]</scope>
    <source>
        <strain evidence="14">Berkeley</strain>
        <tissue evidence="2">Embryo</tissue>
    </source>
</reference>
<reference evidence="11" key="4">
    <citation type="journal article" date="2008" name="J. Proteome Res.">
        <title>Phosphoproteome analysis of Drosophila melanogaster embryos.</title>
        <authorList>
            <person name="Zhai B."/>
            <person name="Villen J."/>
            <person name="Beausoleil S.A."/>
            <person name="Mintseris J."/>
            <person name="Gygi S.P."/>
        </authorList>
    </citation>
    <scope>PHOSPHORYLATION [LARGE SCALE ANALYSIS] AT SER-39; SER-41; SER-67; SER-123 AND SER-129</scope>
    <scope>IDENTIFICATION BY MASS SPECTROMETRY</scope>
    <source>
        <tissue evidence="4">Embryo</tissue>
    </source>
</reference>
<reference evidence="11" key="5">
    <citation type="journal article" date="2008" name="Nat. Immunol.">
        <title>Akirins are highly conserved nuclear proteins required for NF-kappaB-dependent gene expression in Drosophila and mice.</title>
        <authorList>
            <person name="Goto A."/>
            <person name="Matsushita K."/>
            <person name="Gesellchen V."/>
            <person name="El Chamy L."/>
            <person name="Kuttenkeuler D."/>
            <person name="Takeuchi O."/>
            <person name="Hoffmann J.A."/>
            <person name="Akira S."/>
            <person name="Boutros M."/>
            <person name="Reichhart J.-M."/>
        </authorList>
    </citation>
    <scope>FUNCTION</scope>
    <scope>SUBCELLULAR LOCATION</scope>
    <scope>DISRUPTION PHENOTYPE</scope>
</reference>
<reference key="6">
    <citation type="journal article" date="2008" name="Nat. Immunol.">
        <authorList>
            <person name="Goto A."/>
            <person name="Matsushita K."/>
            <person name="Gesellchen V."/>
            <person name="El Chamy L."/>
            <person name="Kuttenkeuler D."/>
            <person name="Takeuchi O."/>
            <person name="Hoffmann J.A."/>
            <person name="Akira S."/>
            <person name="Boutros M."/>
            <person name="Reichhart J.-M."/>
        </authorList>
    </citation>
    <scope>ERRATUM OF PUBMED:18066067</scope>
</reference>
<reference key="7">
    <citation type="journal article" date="2012" name="PLoS Genet.">
        <title>Akirin links twist-regulated transcription with the Brahma chromatin remodeling complex during embryogenesis.</title>
        <authorList>
            <person name="Nowak S.J."/>
            <person name="Aihara H."/>
            <person name="Gonzalez K."/>
            <person name="Nibu Y."/>
            <person name="Baylies M.K."/>
        </authorList>
    </citation>
    <scope>FUNCTION</scope>
    <scope>SUBCELLULAR LOCATION</scope>
    <scope>DISRUPTION PHENOTYPE</scope>
    <scope>INTERACTION WITH TWI</scope>
</reference>
<reference key="8">
    <citation type="journal article" date="2014" name="EMBO J.">
        <title>Akirin specifies NF-kappaB selectivity of Drosophila innate immune response via chromatin remodeling.</title>
        <authorList>
            <person name="Bonnay F."/>
            <person name="Nguyen X.H."/>
            <person name="Cohen-Berros E."/>
            <person name="Troxler L."/>
            <person name="Batsche E."/>
            <person name="Camonis J."/>
            <person name="Takeuchi O."/>
            <person name="Reichhart J.M."/>
            <person name="Matt N."/>
        </authorList>
    </citation>
    <scope>INTERACTION WITH BAP60; BAP55 AND REL</scope>
    <scope>TISSUE SPECIFICITY</scope>
    <scope>SUBCELLULAR LOCATION</scope>
    <scope>FUNCTION</scope>
</reference>
<reference key="9">
    <citation type="journal article" date="2014" name="J. Biol. Chem.">
        <title>The chromatin regulator DMAP1 modulates activity of the nuclear factor B (NF-B) transcription factor Relish in the Drosophila innate immune response.</title>
        <authorList>
            <person name="Goto A."/>
            <person name="Fukuyama H."/>
            <person name="Imler J.L."/>
            <person name="Hoffmann J.A."/>
        </authorList>
    </citation>
    <scope>INTERACTION WITH DMAP1</scope>
</reference>
<reference key="10">
    <citation type="journal article" date="2020" name="PLoS Pathog.">
        <title>Hyd ubiquitinates the NF-kappaB co-factor Akirin to operate an effective immune response in Drosophila.</title>
        <authorList>
            <person name="Cammarata-Mouchtouris A."/>
            <person name="Nguyen X.H."/>
            <person name="Acker A."/>
            <person name="Bonnay F."/>
            <person name="Goto A."/>
            <person name="Orian A."/>
            <person name="Fauvarque M.O."/>
            <person name="Boutros M."/>
            <person name="Reichhart J.M."/>
            <person name="Matt N."/>
        </authorList>
    </citation>
    <scope>UBIQUITINATION BY HYD</scope>
    <scope>FUNCTION</scope>
    <scope>INTERACTION WITH REL</scope>
</reference>
<reference key="11">
    <citation type="journal article" date="2021" name="Dev. Biol.">
        <title>Akirin is critical for early tinman induction and subsequent formation of the heart in Drosophila melanogaster.</title>
        <authorList>
            <person name="Howard A.M."/>
            <person name="Milner H."/>
            <person name="Hupp M."/>
            <person name="Willett C."/>
            <person name="Palermino K."/>
            <person name="Nowak S.J."/>
        </authorList>
    </citation>
    <scope>FUNCTION</scope>
    <scope>DISRUPTION PHENOTYPE</scope>
</reference>
<organism>
    <name type="scientific">Drosophila melanogaster</name>
    <name type="common">Fruit fly</name>
    <dbReference type="NCBI Taxonomy" id="7227"/>
    <lineage>
        <taxon>Eukaryota</taxon>
        <taxon>Metazoa</taxon>
        <taxon>Ecdysozoa</taxon>
        <taxon>Arthropoda</taxon>
        <taxon>Hexapoda</taxon>
        <taxon>Insecta</taxon>
        <taxon>Pterygota</taxon>
        <taxon>Neoptera</taxon>
        <taxon>Endopterygota</taxon>
        <taxon>Diptera</taxon>
        <taxon>Brachycera</taxon>
        <taxon>Muscomorpha</taxon>
        <taxon>Ephydroidea</taxon>
        <taxon>Drosophilidae</taxon>
        <taxon>Drosophila</taxon>
        <taxon>Sophophora</taxon>
    </lineage>
</organism>
<accession>Q9VS59</accession>
<protein>
    <recommendedName>
        <fullName evidence="9">Akirin</fullName>
    </recommendedName>
    <alternativeName>
        <fullName evidence="10">Protein bhringi</fullName>
    </alternativeName>
</protein>
<evidence type="ECO:0000256" key="1">
    <source>
        <dbReference type="SAM" id="MobiDB-lite"/>
    </source>
</evidence>
<evidence type="ECO:0000269" key="2">
    <source>
    </source>
</evidence>
<evidence type="ECO:0000269" key="3">
    <source>
    </source>
</evidence>
<evidence type="ECO:0000269" key="4">
    <source>
    </source>
</evidence>
<evidence type="ECO:0000269" key="5">
    <source>
    </source>
</evidence>
<evidence type="ECO:0000269" key="6">
    <source>
    </source>
</evidence>
<evidence type="ECO:0000269" key="7">
    <source>
    </source>
</evidence>
<evidence type="ECO:0000269" key="8">
    <source>
    </source>
</evidence>
<evidence type="ECO:0000303" key="9">
    <source>
    </source>
</evidence>
<evidence type="ECO:0000303" key="10">
    <source>
    </source>
</evidence>
<evidence type="ECO:0000305" key="11"/>
<evidence type="ECO:0000305" key="12">
    <source>
    </source>
</evidence>
<evidence type="ECO:0000312" key="13">
    <source>
        <dbReference type="EMBL" id="AAF50569.1"/>
    </source>
</evidence>
<evidence type="ECO:0000312" key="14">
    <source>
        <dbReference type="EMBL" id="AAM12282.1"/>
    </source>
</evidence>
<evidence type="ECO:0000312" key="15">
    <source>
        <dbReference type="FlyBase" id="FBgn0082598"/>
    </source>
</evidence>
<dbReference type="EMBL" id="AE014296">
    <property type="protein sequence ID" value="AAF50569.1"/>
    <property type="molecule type" value="Genomic_DNA"/>
</dbReference>
<dbReference type="EMBL" id="AE014296">
    <property type="protein sequence ID" value="AAN12062.1"/>
    <property type="molecule type" value="Genomic_DNA"/>
</dbReference>
<dbReference type="EMBL" id="AY095189">
    <property type="protein sequence ID" value="AAM12282.1"/>
    <property type="molecule type" value="mRNA"/>
</dbReference>
<dbReference type="RefSeq" id="NP_001189058.1">
    <property type="nucleotide sequence ID" value="NM_001202129.2"/>
</dbReference>
<dbReference type="RefSeq" id="NP_001189059.1">
    <property type="nucleotide sequence ID" value="NM_001202130.2"/>
</dbReference>
<dbReference type="RefSeq" id="NP_001189060.1">
    <property type="nucleotide sequence ID" value="NM_001202131.2"/>
</dbReference>
<dbReference type="RefSeq" id="NP_001261511.1">
    <property type="nucleotide sequence ID" value="NM_001274582.1"/>
</dbReference>
<dbReference type="RefSeq" id="NP_648113.1">
    <property type="nucleotide sequence ID" value="NM_139856.4"/>
</dbReference>
<dbReference type="RefSeq" id="NP_729249.1">
    <property type="nucleotide sequence ID" value="NM_168211.3"/>
</dbReference>
<dbReference type="SMR" id="Q9VS59"/>
<dbReference type="BioGRID" id="64261">
    <property type="interactions" value="31"/>
</dbReference>
<dbReference type="FunCoup" id="Q9VS59">
    <property type="interactions" value="2011"/>
</dbReference>
<dbReference type="IntAct" id="Q9VS59">
    <property type="interactions" value="33"/>
</dbReference>
<dbReference type="MINT" id="Q9VS59"/>
<dbReference type="STRING" id="7227.FBpp0291700"/>
<dbReference type="iPTMnet" id="Q9VS59"/>
<dbReference type="PaxDb" id="7227-FBpp0076560"/>
<dbReference type="DNASU" id="38821"/>
<dbReference type="EnsemblMetazoa" id="FBtr0076848">
    <property type="protein sequence ID" value="FBpp0076559"/>
    <property type="gene ID" value="FBgn0082598"/>
</dbReference>
<dbReference type="EnsemblMetazoa" id="FBtr0076849">
    <property type="protein sequence ID" value="FBpp0076560"/>
    <property type="gene ID" value="FBgn0082598"/>
</dbReference>
<dbReference type="EnsemblMetazoa" id="FBtr0302543">
    <property type="protein sequence ID" value="FBpp0291699"/>
    <property type="gene ID" value="FBgn0082598"/>
</dbReference>
<dbReference type="EnsemblMetazoa" id="FBtr0302544">
    <property type="protein sequence ID" value="FBpp0291700"/>
    <property type="gene ID" value="FBgn0082598"/>
</dbReference>
<dbReference type="EnsemblMetazoa" id="FBtr0302545">
    <property type="protein sequence ID" value="FBpp0291701"/>
    <property type="gene ID" value="FBgn0082598"/>
</dbReference>
<dbReference type="EnsemblMetazoa" id="FBtr0332730">
    <property type="protein sequence ID" value="FBpp0304976"/>
    <property type="gene ID" value="FBgn0082598"/>
</dbReference>
<dbReference type="GeneID" id="38821"/>
<dbReference type="KEGG" id="dme:Dmel_CG8580"/>
<dbReference type="UCSC" id="CG8580-RA">
    <property type="organism name" value="d. melanogaster"/>
</dbReference>
<dbReference type="AGR" id="FB:FBgn0082598"/>
<dbReference type="CTD" id="38821"/>
<dbReference type="FlyBase" id="FBgn0082598">
    <property type="gene designation" value="akirin"/>
</dbReference>
<dbReference type="VEuPathDB" id="VectorBase:FBgn0082598"/>
<dbReference type="eggNOG" id="KOG4330">
    <property type="taxonomic scope" value="Eukaryota"/>
</dbReference>
<dbReference type="GeneTree" id="ENSGT00940000174557"/>
<dbReference type="HOGENOM" id="CLU_119227_0_0_1"/>
<dbReference type="InParanoid" id="Q9VS59"/>
<dbReference type="OMA" id="QADGCCP"/>
<dbReference type="OrthoDB" id="10039914at2759"/>
<dbReference type="PhylomeDB" id="Q9VS59"/>
<dbReference type="SignaLink" id="Q9VS59"/>
<dbReference type="BioGRID-ORCS" id="38821">
    <property type="hits" value="1 hit in 3 CRISPR screens"/>
</dbReference>
<dbReference type="ChiTaRS" id="akirin">
    <property type="organism name" value="fly"/>
</dbReference>
<dbReference type="GenomeRNAi" id="38821"/>
<dbReference type="PRO" id="PR:Q9VS59"/>
<dbReference type="Proteomes" id="UP000000803">
    <property type="component" value="Chromosome 3L"/>
</dbReference>
<dbReference type="Bgee" id="FBgn0082598">
    <property type="expression patterns" value="Expressed in eye disc (Drosophila) and 279 other cell types or tissues"/>
</dbReference>
<dbReference type="ExpressionAtlas" id="Q9VS59">
    <property type="expression patterns" value="baseline and differential"/>
</dbReference>
<dbReference type="GO" id="GO:0000785">
    <property type="term" value="C:chromatin"/>
    <property type="evidence" value="ECO:0000318"/>
    <property type="project" value="GO_Central"/>
</dbReference>
<dbReference type="GO" id="GO:0000791">
    <property type="term" value="C:euchromatin"/>
    <property type="evidence" value="ECO:0000314"/>
    <property type="project" value="FlyBase"/>
</dbReference>
<dbReference type="GO" id="GO:0005634">
    <property type="term" value="C:nucleus"/>
    <property type="evidence" value="ECO:0000314"/>
    <property type="project" value="FlyBase"/>
</dbReference>
<dbReference type="GO" id="GO:0005700">
    <property type="term" value="C:polytene chromosome"/>
    <property type="evidence" value="ECO:0000314"/>
    <property type="project" value="FlyBase"/>
</dbReference>
<dbReference type="GO" id="GO:0003712">
    <property type="term" value="F:transcription coregulator activity"/>
    <property type="evidence" value="ECO:0000316"/>
    <property type="project" value="FlyBase"/>
</dbReference>
<dbReference type="GO" id="GO:0050829">
    <property type="term" value="P:defense response to Gram-negative bacterium"/>
    <property type="evidence" value="ECO:0000315"/>
    <property type="project" value="FlyBase"/>
</dbReference>
<dbReference type="GO" id="GO:0007507">
    <property type="term" value="P:heart development"/>
    <property type="evidence" value="ECO:0000315"/>
    <property type="project" value="UniProtKB"/>
</dbReference>
<dbReference type="GO" id="GO:0045087">
    <property type="term" value="P:innate immune response"/>
    <property type="evidence" value="ECO:0007669"/>
    <property type="project" value="UniProtKB-KW"/>
</dbReference>
<dbReference type="GO" id="GO:0007526">
    <property type="term" value="P:larval somatic muscle development"/>
    <property type="evidence" value="ECO:0000315"/>
    <property type="project" value="FlyBase"/>
</dbReference>
<dbReference type="GO" id="GO:0045089">
    <property type="term" value="P:positive regulation of innate immune response"/>
    <property type="evidence" value="ECO:0000315"/>
    <property type="project" value="FlyBase"/>
</dbReference>
<dbReference type="GO" id="GO:0061059">
    <property type="term" value="P:positive regulation of peptidoglycan recognition protein signaling pathway"/>
    <property type="evidence" value="ECO:0000315"/>
    <property type="project" value="UniProtKB"/>
</dbReference>
<dbReference type="GO" id="GO:0045944">
    <property type="term" value="P:positive regulation of transcription by RNA polymerase II"/>
    <property type="evidence" value="ECO:0000315"/>
    <property type="project" value="UniProtKB"/>
</dbReference>
<dbReference type="GO" id="GO:0045088">
    <property type="term" value="P:regulation of innate immune response"/>
    <property type="evidence" value="ECO:0000315"/>
    <property type="project" value="FlyBase"/>
</dbReference>
<dbReference type="CDD" id="cd22240">
    <property type="entry name" value="akirin"/>
    <property type="match status" value="1"/>
</dbReference>
<dbReference type="InterPro" id="IPR024132">
    <property type="entry name" value="Akirin"/>
</dbReference>
<dbReference type="PANTHER" id="PTHR13293">
    <property type="entry name" value="AKIRIN-RELATED"/>
    <property type="match status" value="1"/>
</dbReference>
<dbReference type="PANTHER" id="PTHR13293:SF6">
    <property type="entry name" value="AKIRIN-RELATED"/>
    <property type="match status" value="1"/>
</dbReference>
<name>AKIRN_DROME</name>
<keyword id="KW-0217">Developmental protein</keyword>
<keyword id="KW-0391">Immunity</keyword>
<keyword id="KW-0399">Innate immunity</keyword>
<keyword id="KW-0539">Nucleus</keyword>
<keyword id="KW-0597">Phosphoprotein</keyword>
<keyword id="KW-1185">Reference proteome</keyword>
<keyword id="KW-0832">Ubl conjugation</keyword>
<proteinExistence type="evidence at protein level"/>
<sequence>MACATLKRALDWESMNQRPPKRRRCNPFGQAGSNAGPASPSRDGPSTSAGLPHTPSNRFAKDSTEPSPFSESSLAKMSPDKMAESLCNEIKRLHKRKQLPITSSALERMQDSESSGSEMGPESPRRPDSPQNLMRHGEKALFTFKQVQLICESMIKERENQLRERYESVLTTKLAEQYDAFVKFTYDQIQRRYEAAPSYLS</sequence>